<gene>
    <name type="ORF">GLRG_02475</name>
</gene>
<keyword id="KW-0125">Carotenoid biosynthesis</keyword>
<keyword id="KW-0413">Isomerase</keyword>
<keyword id="KW-0472">Membrane</keyword>
<keyword id="KW-0511">Multifunctional enzyme</keyword>
<keyword id="KW-1185">Reference proteome</keyword>
<keyword id="KW-0808">Transferase</keyword>
<keyword id="KW-0812">Transmembrane</keyword>
<keyword id="KW-1133">Transmembrane helix</keyword>
<dbReference type="EC" id="5.5.1.19" evidence="1"/>
<dbReference type="EC" id="2.5.1.32" evidence="1"/>
<dbReference type="EMBL" id="GG697335">
    <property type="protein sequence ID" value="EFQ26655.1"/>
    <property type="molecule type" value="Genomic_DNA"/>
</dbReference>
<dbReference type="RefSeq" id="XP_008090675.1">
    <property type="nucleotide sequence ID" value="XM_008092484.1"/>
</dbReference>
<dbReference type="SMR" id="E3Q717"/>
<dbReference type="STRING" id="645133.E3Q717"/>
<dbReference type="EnsemblFungi" id="EFQ26655">
    <property type="protein sequence ID" value="EFQ26655"/>
    <property type="gene ID" value="GLRG_02475"/>
</dbReference>
<dbReference type="GeneID" id="24407840"/>
<dbReference type="VEuPathDB" id="FungiDB:GLRG_02475"/>
<dbReference type="eggNOG" id="KOG1459">
    <property type="taxonomic scope" value="Eukaryota"/>
</dbReference>
<dbReference type="HOGENOM" id="CLU_012965_0_0_1"/>
<dbReference type="OrthoDB" id="6600518at2759"/>
<dbReference type="UniPathway" id="UPA00799">
    <property type="reaction ID" value="UER00773"/>
</dbReference>
<dbReference type="UniPathway" id="UPA00802"/>
<dbReference type="Proteomes" id="UP000008782">
    <property type="component" value="Unassembled WGS sequence"/>
</dbReference>
<dbReference type="GO" id="GO:0016020">
    <property type="term" value="C:membrane"/>
    <property type="evidence" value="ECO:0007669"/>
    <property type="project" value="UniProtKB-SubCell"/>
</dbReference>
<dbReference type="GO" id="GO:0004311">
    <property type="term" value="F:geranylgeranyl diphosphate synthase activity"/>
    <property type="evidence" value="ECO:0007669"/>
    <property type="project" value="InterPro"/>
</dbReference>
<dbReference type="GO" id="GO:0016872">
    <property type="term" value="F:intramolecular lyase activity"/>
    <property type="evidence" value="ECO:0007669"/>
    <property type="project" value="InterPro"/>
</dbReference>
<dbReference type="GO" id="GO:0045436">
    <property type="term" value="F:lycopene beta cyclase activity"/>
    <property type="evidence" value="ECO:0007669"/>
    <property type="project" value="UniProtKB-ARBA"/>
</dbReference>
<dbReference type="GO" id="GO:0051996">
    <property type="term" value="F:squalene synthase [NAD(P)H] activity"/>
    <property type="evidence" value="ECO:0007669"/>
    <property type="project" value="InterPro"/>
</dbReference>
<dbReference type="GO" id="GO:0016117">
    <property type="term" value="P:carotenoid biosynthetic process"/>
    <property type="evidence" value="ECO:0007669"/>
    <property type="project" value="UniProtKB-KW"/>
</dbReference>
<dbReference type="CDD" id="cd00683">
    <property type="entry name" value="Trans_IPPS_HH"/>
    <property type="match status" value="1"/>
</dbReference>
<dbReference type="Gene3D" id="1.10.600.10">
    <property type="entry name" value="Farnesyl Diphosphate Synthase"/>
    <property type="match status" value="1"/>
</dbReference>
<dbReference type="InterPro" id="IPR008949">
    <property type="entry name" value="Isoprenoid_synthase_dom_sf"/>
</dbReference>
<dbReference type="InterPro" id="IPR017825">
    <property type="entry name" value="Lycopene_cyclase_dom"/>
</dbReference>
<dbReference type="InterPro" id="IPR002060">
    <property type="entry name" value="Squ/phyt_synthse"/>
</dbReference>
<dbReference type="InterPro" id="IPR019845">
    <property type="entry name" value="Squalene/phytoene_synthase_CS"/>
</dbReference>
<dbReference type="InterPro" id="IPR044843">
    <property type="entry name" value="Trans_IPPS_bact-type"/>
</dbReference>
<dbReference type="InterPro" id="IPR033904">
    <property type="entry name" value="Trans_IPPS_HH"/>
</dbReference>
<dbReference type="NCBIfam" id="TIGR03462">
    <property type="entry name" value="CarR_dom_SF"/>
    <property type="match status" value="2"/>
</dbReference>
<dbReference type="PANTHER" id="PTHR31480">
    <property type="entry name" value="BIFUNCTIONAL LYCOPENE CYCLASE/PHYTOENE SYNTHASE"/>
    <property type="match status" value="1"/>
</dbReference>
<dbReference type="Pfam" id="PF00494">
    <property type="entry name" value="SQS_PSY"/>
    <property type="match status" value="1"/>
</dbReference>
<dbReference type="SFLD" id="SFLDG01212">
    <property type="entry name" value="Phytoene_synthase_like"/>
    <property type="match status" value="1"/>
</dbReference>
<dbReference type="SFLD" id="SFLDG01018">
    <property type="entry name" value="Squalene/Phytoene_Synthase_Lik"/>
    <property type="match status" value="1"/>
</dbReference>
<dbReference type="SUPFAM" id="SSF48576">
    <property type="entry name" value="Terpenoid synthases"/>
    <property type="match status" value="1"/>
</dbReference>
<dbReference type="PROSITE" id="PS01044">
    <property type="entry name" value="SQUALEN_PHYTOEN_SYN_1"/>
    <property type="match status" value="1"/>
</dbReference>
<dbReference type="PROSITE" id="PS01045">
    <property type="entry name" value="SQUALEN_PHYTOEN_SYN_2"/>
    <property type="match status" value="1"/>
</dbReference>
<feature type="chain" id="PRO_0000409235" description="Bifunctional lycopene cyclase/phytoene synthase">
    <location>
        <begin position="1"/>
        <end position="587"/>
    </location>
</feature>
<feature type="transmembrane region" description="Helical" evidence="2">
    <location>
        <begin position="8"/>
        <end position="28"/>
    </location>
</feature>
<feature type="transmembrane region" description="Helical" evidence="2">
    <location>
        <begin position="35"/>
        <end position="55"/>
    </location>
</feature>
<feature type="transmembrane region" description="Helical" evidence="2">
    <location>
        <begin position="77"/>
        <end position="97"/>
    </location>
</feature>
<feature type="transmembrane region" description="Helical" evidence="2">
    <location>
        <begin position="120"/>
        <end position="140"/>
    </location>
</feature>
<feature type="transmembrane region" description="Helical" evidence="2">
    <location>
        <begin position="150"/>
        <end position="170"/>
    </location>
</feature>
<feature type="transmembrane region" description="Helical" evidence="2">
    <location>
        <begin position="172"/>
        <end position="192"/>
    </location>
</feature>
<feature type="transmembrane region" description="Helical" evidence="2">
    <location>
        <begin position="220"/>
        <end position="240"/>
    </location>
</feature>
<feature type="region of interest" description="Lycopene beta-cyclase" evidence="1">
    <location>
        <begin position="1"/>
        <end position="242"/>
    </location>
</feature>
<feature type="region of interest" description="Phytoene synthase" evidence="1">
    <location>
        <begin position="249"/>
        <end position="587"/>
    </location>
</feature>
<sequence>MGYDYALVHVKYTIPLAALLTVFSYPVFTRLDVVRTLFIVTIAFVATIPWDSYLIRTNVWTYPPDAVLGPTLYDIPAEELFFFIIQTYITAQLYIILNKPVLHAQYLNSPATLPQWIKSGKLVGQLALSGSVLLGTWLIAKKGEGTYLGLILVWACTFALFTWTITAHFLLALPLACTALPILLPTVYLWIVDEMALGRGTWAIESGTKLELQLFGSLEIEEATFFLVTNMLIVFGIAAFDKAVAVCDAFPEKFDKPADALAMSLLRARVFPSSKYDMQRILGIRQAAARLAKKSRSFHLASSVFPGRLRIDLTLLYSYCRLADDLVDDAATPEEAAVWISKLDRHLSLLYKDPDATSTPLASKYAAENFPPSALSALDMLPTSLLPREPLAELLKGFEMDLSFSNSAFPIADPEDLELYAARVASTVGQACLELVFCHCQHGLPDYMKAYLRNTARQMGLALQFVNISRDIAVDAKIGRVYLPTTWLKEEGLTPEDVLKSPNSEGVGKVRRRILAKALDHYGEARDSMKWIPSEARGPMIVAVESYMEIGRVLMRNGGSAAADGSGRATVPKSRRIWVAWSTLMAA</sequence>
<organism>
    <name type="scientific">Colletotrichum graminicola (strain M1.001 / M2 / FGSC 10212)</name>
    <name type="common">Maize anthracnose fungus</name>
    <name type="synonym">Glomerella graminicola</name>
    <dbReference type="NCBI Taxonomy" id="645133"/>
    <lineage>
        <taxon>Eukaryota</taxon>
        <taxon>Fungi</taxon>
        <taxon>Dikarya</taxon>
        <taxon>Ascomycota</taxon>
        <taxon>Pezizomycotina</taxon>
        <taxon>Sordariomycetes</taxon>
        <taxon>Hypocreomycetidae</taxon>
        <taxon>Glomerellales</taxon>
        <taxon>Glomerellaceae</taxon>
        <taxon>Colletotrichum</taxon>
        <taxon>Colletotrichum graminicola species complex</taxon>
    </lineage>
</organism>
<reference key="1">
    <citation type="journal article" date="2012" name="Nat. Genet.">
        <title>Lifestyle transitions in plant pathogenic Colletotrichum fungi deciphered by genome and transcriptome analyses.</title>
        <authorList>
            <person name="O'Connell R.J."/>
            <person name="Thon M.R."/>
            <person name="Hacquard S."/>
            <person name="Amyotte S.G."/>
            <person name="Kleemann J."/>
            <person name="Torres M.F."/>
            <person name="Damm U."/>
            <person name="Buiate E.A."/>
            <person name="Epstein L."/>
            <person name="Alkan N."/>
            <person name="Altmueller J."/>
            <person name="Alvarado-Balderrama L."/>
            <person name="Bauser C.A."/>
            <person name="Becker C."/>
            <person name="Birren B.W."/>
            <person name="Chen Z."/>
            <person name="Choi J."/>
            <person name="Crouch J.A."/>
            <person name="Duvick J.P."/>
            <person name="Farman M.A."/>
            <person name="Gan P."/>
            <person name="Heiman D."/>
            <person name="Henrissat B."/>
            <person name="Howard R.J."/>
            <person name="Kabbage M."/>
            <person name="Koch C."/>
            <person name="Kracher B."/>
            <person name="Kubo Y."/>
            <person name="Law A.D."/>
            <person name="Lebrun M.-H."/>
            <person name="Lee Y.-H."/>
            <person name="Miyara I."/>
            <person name="Moore N."/>
            <person name="Neumann U."/>
            <person name="Nordstroem K."/>
            <person name="Panaccione D.G."/>
            <person name="Panstruga R."/>
            <person name="Place M."/>
            <person name="Proctor R.H."/>
            <person name="Prusky D."/>
            <person name="Rech G."/>
            <person name="Reinhardt R."/>
            <person name="Rollins J.A."/>
            <person name="Rounsley S."/>
            <person name="Schardl C.L."/>
            <person name="Schwartz D.C."/>
            <person name="Shenoy N."/>
            <person name="Shirasu K."/>
            <person name="Sikhakolli U.R."/>
            <person name="Stueber K."/>
            <person name="Sukno S.A."/>
            <person name="Sweigard J.A."/>
            <person name="Takano Y."/>
            <person name="Takahara H."/>
            <person name="Trail F."/>
            <person name="van der Does H.C."/>
            <person name="Voll L.M."/>
            <person name="Will I."/>
            <person name="Young S."/>
            <person name="Zeng Q."/>
            <person name="Zhang J."/>
            <person name="Zhou S."/>
            <person name="Dickman M.B."/>
            <person name="Schulze-Lefert P."/>
            <person name="Ver Loren van Themaat E."/>
            <person name="Ma L.-J."/>
            <person name="Vaillancourt L.J."/>
        </authorList>
    </citation>
    <scope>NUCLEOTIDE SEQUENCE [LARGE SCALE GENOMIC DNA]</scope>
    <source>
        <strain>M1.001 / M2 / FGSC 10212</strain>
    </source>
</reference>
<comment type="function">
    <text evidence="1">Bifunctional enzyme that catalyzes the reactions from geranylgeranyl diphosphate to phytoene (phytoene synthase) and lycopene to beta-carotene via the intermediate gamma-carotene (lycopene cyclase).</text>
</comment>
<comment type="catalytic activity">
    <reaction evidence="1">
        <text>all-trans-lycopene = gamma-carotene</text>
        <dbReference type="Rhea" id="RHEA:32219"/>
        <dbReference type="ChEBI" id="CHEBI:15948"/>
        <dbReference type="ChEBI" id="CHEBI:27740"/>
        <dbReference type="EC" id="5.5.1.19"/>
    </reaction>
</comment>
<comment type="catalytic activity">
    <reaction evidence="1">
        <text>gamma-carotene = all-trans-beta-carotene</text>
        <dbReference type="Rhea" id="RHEA:32239"/>
        <dbReference type="ChEBI" id="CHEBI:17579"/>
        <dbReference type="ChEBI" id="CHEBI:27740"/>
        <dbReference type="EC" id="5.5.1.19"/>
    </reaction>
</comment>
<comment type="catalytic activity">
    <reaction evidence="1">
        <text>2 (2E,6E,10E)-geranylgeranyl diphosphate = 15-cis-phytoene + 2 diphosphate</text>
        <dbReference type="Rhea" id="RHEA:34475"/>
        <dbReference type="ChEBI" id="CHEBI:27787"/>
        <dbReference type="ChEBI" id="CHEBI:33019"/>
        <dbReference type="ChEBI" id="CHEBI:58756"/>
        <dbReference type="EC" id="2.5.1.32"/>
    </reaction>
</comment>
<comment type="pathway">
    <text evidence="1">Carotenoid biosynthesis; beta-carotene biosynthesis.</text>
</comment>
<comment type="pathway">
    <text evidence="1">Carotenoid biosynthesis; phytoene biosynthesis; all-trans-phytoene from geranylgeranyl diphosphate: step 1/1.</text>
</comment>
<comment type="subcellular location">
    <subcellularLocation>
        <location evidence="3">Membrane</location>
        <topology evidence="3">Multi-pass membrane protein</topology>
    </subcellularLocation>
</comment>
<comment type="similarity">
    <text evidence="3">In the N-terminal section; belongs to the lycopene beta-cyclase family.</text>
</comment>
<comment type="similarity">
    <text evidence="3">In the C-terminal section; belongs to the phytoene/squalene synthase family.</text>
</comment>
<proteinExistence type="inferred from homology"/>
<evidence type="ECO:0000250" key="1">
    <source>
        <dbReference type="UniProtKB" id="P37295"/>
    </source>
</evidence>
<evidence type="ECO:0000255" key="2"/>
<evidence type="ECO:0000305" key="3"/>
<protein>
    <recommendedName>
        <fullName evidence="1">Bifunctional lycopene cyclase/phytoene synthase</fullName>
    </recommendedName>
    <domain>
        <recommendedName>
            <fullName evidence="1">Lycopene beta-cyclase</fullName>
            <ecNumber evidence="1">5.5.1.19</ecNumber>
        </recommendedName>
        <alternativeName>
            <fullName evidence="1">Lycopene cyclase</fullName>
        </alternativeName>
    </domain>
    <domain>
        <recommendedName>
            <fullName evidence="1">Phytoene synthase</fullName>
            <ecNumber evidence="1">2.5.1.32</ecNumber>
        </recommendedName>
    </domain>
</protein>
<name>LCPS_COLGM</name>
<accession>E3Q717</accession>